<keyword id="KW-0007">Acetylation</keyword>
<keyword id="KW-0010">Activator</keyword>
<keyword id="KW-0112">Calmodulin-binding</keyword>
<keyword id="KW-0963">Cytoplasm</keyword>
<keyword id="KW-0221">Differentiation</keyword>
<keyword id="KW-0238">DNA-binding</keyword>
<keyword id="KW-0539">Nucleus</keyword>
<keyword id="KW-1185">Reference proteome</keyword>
<keyword id="KW-0678">Repressor</keyword>
<keyword id="KW-0726">Sexual differentiation</keyword>
<keyword id="KW-0804">Transcription</keyword>
<keyword id="KW-0805">Transcription regulation</keyword>
<evidence type="ECO:0000250" key="1">
    <source>
        <dbReference type="UniProtKB" id="P36394"/>
    </source>
</evidence>
<evidence type="ECO:0000250" key="2">
    <source>
        <dbReference type="UniProtKB" id="Q05066"/>
    </source>
</evidence>
<evidence type="ECO:0000255" key="3">
    <source>
        <dbReference type="PROSITE-ProRule" id="PRU00267"/>
    </source>
</evidence>
<evidence type="ECO:0000256" key="4">
    <source>
        <dbReference type="SAM" id="MobiDB-lite"/>
    </source>
</evidence>
<evidence type="ECO:0000305" key="5"/>
<reference key="1">
    <citation type="journal article" date="1993" name="Nature">
        <title>Rapid sequence evolution of the mammalian sex-determining gene SRY.</title>
        <authorList>
            <person name="Whitfield L.S."/>
            <person name="Lovell-Badge R."/>
            <person name="Goodfellow P.N."/>
        </authorList>
    </citation>
    <scope>NUCLEOTIDE SEQUENCE [GENOMIC DNA]</scope>
</reference>
<comment type="function">
    <text evidence="1 2">Transcriptional regulator that controls a genetic switch in male development. It is necessary and sufficient for initiating male sex determination by directing the development of supporting cell precursors (pre-Sertoli cells) as Sertoli rather than granulosa cells. Involved in different aspects of gene regulation including promoter activation or repression. Binds to the DNA consensus sequence 5'-[AT]AACAA[AT]-3'. SRY HMG box recognizes DNA by partial intercalation in the minor groove and promotes DNA bending. Also involved in pre-mRNA splicing (By similarity). In male adult brain involved in the maintenance of motor functions of dopaminergic neurons (By similarity).</text>
</comment>
<comment type="subunit">
    <text evidence="2">Interacts with CALM, EP300, HDAC3, KPNB1, ZNF208 isoform KRAB-O, PARP1, SLC9A3R2 and WT1. The interaction with EP300 modulates its DNA-binding activity. The interaction with KPNB1 is sensitive to dissociation by Ran in the GTP-bound form. Interaction with PARP1 impaired its DNA-binding activity.</text>
</comment>
<comment type="subcellular location">
    <subcellularLocation>
        <location evidence="2">Nucleus speckle</location>
    </subcellularLocation>
    <subcellularLocation>
        <location evidence="2">Cytoplasm</location>
    </subcellularLocation>
    <subcellularLocation>
        <location evidence="2">Nucleus</location>
    </subcellularLocation>
</comment>
<comment type="PTM">
    <text evidence="2">Acetylation of Lys-136 contributes to its nuclear localization and enhances its interaction with KPNB1. Deacetylated by HDAC3.</text>
</comment>
<comment type="similarity">
    <text evidence="5">Belongs to the SRY family.</text>
</comment>
<comment type="online information" name="Protein Spotlight">
    <link uri="https://www.proteinspotlight.org/back_issues/080"/>
    <text>The tenuous nature of sex - Issue 80 of March 2007</text>
</comment>
<accession>P48046</accession>
<organism>
    <name type="scientific">Gorilla gorilla gorilla</name>
    <name type="common">Western lowland gorilla</name>
    <dbReference type="NCBI Taxonomy" id="9595"/>
    <lineage>
        <taxon>Eukaryota</taxon>
        <taxon>Metazoa</taxon>
        <taxon>Chordata</taxon>
        <taxon>Craniata</taxon>
        <taxon>Vertebrata</taxon>
        <taxon>Euteleostomi</taxon>
        <taxon>Mammalia</taxon>
        <taxon>Eutheria</taxon>
        <taxon>Euarchontoglires</taxon>
        <taxon>Primates</taxon>
        <taxon>Haplorrhini</taxon>
        <taxon>Catarrhini</taxon>
        <taxon>Hominidae</taxon>
        <taxon>Gorilla</taxon>
    </lineage>
</organism>
<dbReference type="EMBL" id="X86382">
    <property type="protein sequence ID" value="CAA60142.1"/>
    <property type="molecule type" value="Genomic_DNA"/>
</dbReference>
<dbReference type="PIR" id="S35560">
    <property type="entry name" value="S35560"/>
</dbReference>
<dbReference type="RefSeq" id="XP_055233210.1">
    <property type="nucleotide sequence ID" value="XM_055377235.2"/>
</dbReference>
<dbReference type="SMR" id="P48046"/>
<dbReference type="FunCoup" id="P48046">
    <property type="interactions" value="11"/>
</dbReference>
<dbReference type="GeneID" id="129530420"/>
<dbReference type="InParanoid" id="P48046"/>
<dbReference type="Proteomes" id="UP000001519">
    <property type="component" value="Unplaced"/>
</dbReference>
<dbReference type="GO" id="GO:0005737">
    <property type="term" value="C:cytoplasm"/>
    <property type="evidence" value="ECO:0007669"/>
    <property type="project" value="UniProtKB-SubCell"/>
</dbReference>
<dbReference type="GO" id="GO:0016607">
    <property type="term" value="C:nuclear speck"/>
    <property type="evidence" value="ECO:0007669"/>
    <property type="project" value="UniProtKB-SubCell"/>
</dbReference>
<dbReference type="GO" id="GO:0005634">
    <property type="term" value="C:nucleus"/>
    <property type="evidence" value="ECO:0000250"/>
    <property type="project" value="UniProtKB"/>
</dbReference>
<dbReference type="GO" id="GO:0005516">
    <property type="term" value="F:calmodulin binding"/>
    <property type="evidence" value="ECO:0007669"/>
    <property type="project" value="UniProtKB-KW"/>
</dbReference>
<dbReference type="GO" id="GO:0001228">
    <property type="term" value="F:DNA-binding transcription activator activity, RNA polymerase II-specific"/>
    <property type="evidence" value="ECO:0000318"/>
    <property type="project" value="GO_Central"/>
</dbReference>
<dbReference type="GO" id="GO:0000978">
    <property type="term" value="F:RNA polymerase II cis-regulatory region sequence-specific DNA binding"/>
    <property type="evidence" value="ECO:0000318"/>
    <property type="project" value="GO_Central"/>
</dbReference>
<dbReference type="GO" id="GO:0030154">
    <property type="term" value="P:cell differentiation"/>
    <property type="evidence" value="ECO:0000318"/>
    <property type="project" value="GO_Central"/>
</dbReference>
<dbReference type="GO" id="GO:0030238">
    <property type="term" value="P:male sex determination"/>
    <property type="evidence" value="ECO:0000318"/>
    <property type="project" value="GO_Central"/>
</dbReference>
<dbReference type="GO" id="GO:0010628">
    <property type="term" value="P:positive regulation of gene expression"/>
    <property type="evidence" value="ECO:0000250"/>
    <property type="project" value="UniProtKB"/>
</dbReference>
<dbReference type="GO" id="GO:0045944">
    <property type="term" value="P:positive regulation of transcription by RNA polymerase II"/>
    <property type="evidence" value="ECO:0000318"/>
    <property type="project" value="GO_Central"/>
</dbReference>
<dbReference type="GO" id="GO:0007548">
    <property type="term" value="P:sex differentiation"/>
    <property type="evidence" value="ECO:0007669"/>
    <property type="project" value="UniProtKB-KW"/>
</dbReference>
<dbReference type="CDD" id="cd22034">
    <property type="entry name" value="HMG-box_SoxA_SRY"/>
    <property type="match status" value="1"/>
</dbReference>
<dbReference type="FunFam" id="1.10.30.10:FF:000002">
    <property type="entry name" value="transcription factor Sox-2"/>
    <property type="match status" value="1"/>
</dbReference>
<dbReference type="Gene3D" id="1.10.30.10">
    <property type="entry name" value="High mobility group box domain"/>
    <property type="match status" value="1"/>
</dbReference>
<dbReference type="InterPro" id="IPR009071">
    <property type="entry name" value="HMG_box_dom"/>
</dbReference>
<dbReference type="InterPro" id="IPR036910">
    <property type="entry name" value="HMG_box_dom_sf"/>
</dbReference>
<dbReference type="InterPro" id="IPR017253">
    <property type="entry name" value="SRY"/>
</dbReference>
<dbReference type="InterPro" id="IPR050140">
    <property type="entry name" value="SRY-related_HMG-box_TF-like"/>
</dbReference>
<dbReference type="PANTHER" id="PTHR10270:SF161">
    <property type="entry name" value="SEX-DETERMINING REGION Y PROTEIN"/>
    <property type="match status" value="1"/>
</dbReference>
<dbReference type="PANTHER" id="PTHR10270">
    <property type="entry name" value="SOX TRANSCRIPTION FACTOR"/>
    <property type="match status" value="1"/>
</dbReference>
<dbReference type="Pfam" id="PF00505">
    <property type="entry name" value="HMG_box"/>
    <property type="match status" value="1"/>
</dbReference>
<dbReference type="PIRSF" id="PIRSF037653">
    <property type="entry name" value="SRY"/>
    <property type="match status" value="1"/>
</dbReference>
<dbReference type="SMART" id="SM00398">
    <property type="entry name" value="HMG"/>
    <property type="match status" value="1"/>
</dbReference>
<dbReference type="SUPFAM" id="SSF47095">
    <property type="entry name" value="HMG-box"/>
    <property type="match status" value="1"/>
</dbReference>
<dbReference type="PROSITE" id="PS50118">
    <property type="entry name" value="HMG_BOX_2"/>
    <property type="match status" value="1"/>
</dbReference>
<name>SRY_GORGO</name>
<proteinExistence type="inferred from homology"/>
<feature type="chain" id="PRO_0000048667" description="Sex-determining region Y protein">
    <location>
        <begin position="1"/>
        <end position="204"/>
    </location>
</feature>
<feature type="DNA-binding region" description="HMG box" evidence="3">
    <location>
        <begin position="60"/>
        <end position="128"/>
    </location>
</feature>
<feature type="region of interest" description="Disordered" evidence="4">
    <location>
        <begin position="175"/>
        <end position="204"/>
    </location>
</feature>
<feature type="compositionally biased region" description="Basic and acidic residues" evidence="4">
    <location>
        <begin position="194"/>
        <end position="204"/>
    </location>
</feature>
<sequence>MQSYASAMLSVFNSDDYSPAVQQTIPAHRRSSSFLCTESCNSKYQCETGENSKGSVQDRVKRPMNAFIVWSRDQRRKMALENPRMRNSEISKQLGYQWKMLTEAEKWPFFQEAQKLQAMHREKYPNYKYRPRRKAKMLPKNCSLLPADPASVLCSEVQLDNRLYRDDCTKATHSRMEHQLGHLPPINAASSPQQRDRYSHWTKL</sequence>
<gene>
    <name type="primary">SRY</name>
    <name type="synonym">TDF</name>
</gene>
<protein>
    <recommendedName>
        <fullName>Sex-determining region Y protein</fullName>
    </recommendedName>
    <alternativeName>
        <fullName>Testis-determining factor</fullName>
    </alternativeName>
</protein>